<comment type="function">
    <text>Receptor for all-trans- and 11-cis-retinal. Binds preferentially to the former and may catalyze the isomerization of the chromophore by a retinochrome-like mechanism.</text>
</comment>
<comment type="subcellular location">
    <subcellularLocation>
        <location>Membrane</location>
        <topology>Multi-pass membrane protein</topology>
    </subcellularLocation>
</comment>
<comment type="tissue specificity">
    <text>Preferentially expressed at high levels in the retinal pigment epithelium (RPE) and Mueller cells of the neural retina.</text>
</comment>
<comment type="PTM">
    <text>Covalently binds all-trans- and 11-cis-retinal.</text>
</comment>
<comment type="similarity">
    <text evidence="3">Belongs to the G-protein coupled receptor 1 family. Opsin subfamily.</text>
</comment>
<keyword id="KW-0157">Chromophore</keyword>
<keyword id="KW-1015">Disulfide bond</keyword>
<keyword id="KW-0297">G-protein coupled receptor</keyword>
<keyword id="KW-0325">Glycoprotein</keyword>
<keyword id="KW-0472">Membrane</keyword>
<keyword id="KW-0600">Photoreceptor protein</keyword>
<keyword id="KW-0675">Receptor</keyword>
<keyword id="KW-1185">Reference proteome</keyword>
<keyword id="KW-0681">Retinal protein</keyword>
<keyword id="KW-0716">Sensory transduction</keyword>
<keyword id="KW-0807">Transducer</keyword>
<keyword id="KW-0812">Transmembrane</keyword>
<keyword id="KW-1133">Transmembrane helix</keyword>
<keyword id="KW-0844">Vision</keyword>
<protein>
    <recommendedName>
        <fullName>RPE-retinal G protein-coupled receptor</fullName>
    </recommendedName>
</protein>
<sequence length="291" mass="31961">MAESGTLPTGFGELEVLAVGTVLLVEALSGLSLNILTILSFCKTPELRTPSHLLVLSLALADSGISLNALVAATSSLLRRWPYGSEGCQAHGFQGFVTALASICSSAAVAWGRYHHFCTRSRLDWNTAVSLVFFVWLSSAFWAALPLLGWGHYDYEPLGTCCTLDYSRGDRNFTSFLFTMAFFNFLLPLFITVVSYRLMEQKLGKTSRPPVNTVLPARTLLLGWGPYALLYLYATIADATSISPKLQMVPALIAKAVPTVNAMNYALGSEMVHRGIWQCLSPQRREHSREQ</sequence>
<proteinExistence type="evidence at transcript level"/>
<feature type="chain" id="PRO_0000197821" description="RPE-retinal G protein-coupled receptor">
    <location>
        <begin position="1"/>
        <end position="291"/>
    </location>
</feature>
<feature type="topological domain" description="Extracellular" evidence="2">
    <location>
        <begin position="1"/>
        <end position="15"/>
    </location>
</feature>
<feature type="transmembrane region" description="Helical; Name=1" evidence="2">
    <location>
        <begin position="16"/>
        <end position="36"/>
    </location>
</feature>
<feature type="topological domain" description="Cytoplasmic" evidence="2">
    <location>
        <begin position="37"/>
        <end position="52"/>
    </location>
</feature>
<feature type="transmembrane region" description="Helical; Name=2" evidence="2">
    <location>
        <begin position="53"/>
        <end position="73"/>
    </location>
</feature>
<feature type="topological domain" description="Extracellular" evidence="2">
    <location>
        <begin position="74"/>
        <end position="91"/>
    </location>
</feature>
<feature type="transmembrane region" description="Helical; Name=3" evidence="2">
    <location>
        <begin position="92"/>
        <end position="112"/>
    </location>
</feature>
<feature type="topological domain" description="Cytoplasmic" evidence="2">
    <location>
        <begin position="113"/>
        <end position="130"/>
    </location>
</feature>
<feature type="transmembrane region" description="Helical; Name=4" evidence="2">
    <location>
        <begin position="131"/>
        <end position="151"/>
    </location>
</feature>
<feature type="topological domain" description="Extracellular" evidence="2">
    <location>
        <begin position="152"/>
        <end position="175"/>
    </location>
</feature>
<feature type="transmembrane region" description="Helical; Name=5" evidence="2">
    <location>
        <begin position="176"/>
        <end position="196"/>
    </location>
</feature>
<feature type="topological domain" description="Cytoplasmic" evidence="2">
    <location>
        <begin position="197"/>
        <end position="219"/>
    </location>
</feature>
<feature type="transmembrane region" description="Helical; Name=6" evidence="2">
    <location>
        <begin position="220"/>
        <end position="240"/>
    </location>
</feature>
<feature type="topological domain" description="Extracellular" evidence="2">
    <location>
        <begin position="241"/>
        <end position="247"/>
    </location>
</feature>
<feature type="transmembrane region" description="Helical; Name=7" evidence="2">
    <location>
        <begin position="248"/>
        <end position="268"/>
    </location>
</feature>
<feature type="topological domain" description="Cytoplasmic" evidence="2">
    <location>
        <begin position="269"/>
        <end position="291"/>
    </location>
</feature>
<feature type="modified residue" description="N6-(retinylidene)lysine" evidence="1">
    <location>
        <position position="255"/>
    </location>
</feature>
<feature type="glycosylation site" description="N-linked (GlcNAc...) asparagine" evidence="2">
    <location>
        <position position="172"/>
    </location>
</feature>
<feature type="disulfide bond" evidence="3">
    <location>
        <begin position="88"/>
        <end position="162"/>
    </location>
</feature>
<evidence type="ECO:0000250" key="1"/>
<evidence type="ECO:0000255" key="2"/>
<evidence type="ECO:0000255" key="3">
    <source>
        <dbReference type="PROSITE-ProRule" id="PRU00521"/>
    </source>
</evidence>
<accession>P47803</accession>
<accession>Q148K9</accession>
<dbReference type="EMBL" id="S67535">
    <property type="protein sequence ID" value="AAB29270.1"/>
    <property type="molecule type" value="mRNA"/>
</dbReference>
<dbReference type="EMBL" id="BC118188">
    <property type="protein sequence ID" value="AAI18189.1"/>
    <property type="molecule type" value="mRNA"/>
</dbReference>
<dbReference type="PIR" id="I46965">
    <property type="entry name" value="I46965"/>
</dbReference>
<dbReference type="RefSeq" id="NP_786969.1">
    <property type="nucleotide sequence ID" value="NM_175775.2"/>
</dbReference>
<dbReference type="SMR" id="P47803"/>
<dbReference type="CORUM" id="P47803"/>
<dbReference type="FunCoup" id="P47803">
    <property type="interactions" value="216"/>
</dbReference>
<dbReference type="STRING" id="9913.ENSBTAP00000020822"/>
<dbReference type="GlyCosmos" id="P47803">
    <property type="glycosylation" value="1 site, No reported glycans"/>
</dbReference>
<dbReference type="GlyGen" id="P47803">
    <property type="glycosylation" value="1 site"/>
</dbReference>
<dbReference type="PaxDb" id="9913-ENSBTAP00000020822"/>
<dbReference type="Ensembl" id="ENSBTAT00000020822.7">
    <property type="protein sequence ID" value="ENSBTAP00000020822.5"/>
    <property type="gene ID" value="ENSBTAG00000015681.7"/>
</dbReference>
<dbReference type="GeneID" id="280911"/>
<dbReference type="KEGG" id="bta:280911"/>
<dbReference type="CTD" id="5995"/>
<dbReference type="VEuPathDB" id="HostDB:ENSBTAG00000015681"/>
<dbReference type="VGNC" id="VGNC:33909">
    <property type="gene designation" value="RGR"/>
</dbReference>
<dbReference type="eggNOG" id="KOG3656">
    <property type="taxonomic scope" value="Eukaryota"/>
</dbReference>
<dbReference type="GeneTree" id="ENSGT01130000278323"/>
<dbReference type="HOGENOM" id="CLU_009579_3_2_1"/>
<dbReference type="InParanoid" id="P47803"/>
<dbReference type="OMA" id="KYRMIPA"/>
<dbReference type="OrthoDB" id="10015560at2759"/>
<dbReference type="TreeFam" id="TF324998"/>
<dbReference type="Reactome" id="R-BTA-418594">
    <property type="pathway name" value="G alpha (i) signalling events"/>
</dbReference>
<dbReference type="Reactome" id="R-BTA-419771">
    <property type="pathway name" value="Opsins"/>
</dbReference>
<dbReference type="Proteomes" id="UP000009136">
    <property type="component" value="Chromosome 28"/>
</dbReference>
<dbReference type="Bgee" id="ENSBTAG00000015681">
    <property type="expression patterns" value="Expressed in retina and 29 other cell types or tissues"/>
</dbReference>
<dbReference type="GO" id="GO:0005886">
    <property type="term" value="C:plasma membrane"/>
    <property type="evidence" value="ECO:0000318"/>
    <property type="project" value="GO_Central"/>
</dbReference>
<dbReference type="GO" id="GO:0008020">
    <property type="term" value="F:G protein-coupled photoreceptor activity"/>
    <property type="evidence" value="ECO:0000318"/>
    <property type="project" value="GO_Central"/>
</dbReference>
<dbReference type="GO" id="GO:0071482">
    <property type="term" value="P:cellular response to light stimulus"/>
    <property type="evidence" value="ECO:0000318"/>
    <property type="project" value="GO_Central"/>
</dbReference>
<dbReference type="GO" id="GO:0007186">
    <property type="term" value="P:G protein-coupled receptor signaling pathway"/>
    <property type="evidence" value="ECO:0000318"/>
    <property type="project" value="GO_Central"/>
</dbReference>
<dbReference type="GO" id="GO:0007602">
    <property type="term" value="P:phototransduction"/>
    <property type="evidence" value="ECO:0000318"/>
    <property type="project" value="GO_Central"/>
</dbReference>
<dbReference type="GO" id="GO:0007601">
    <property type="term" value="P:visual perception"/>
    <property type="evidence" value="ECO:0007669"/>
    <property type="project" value="UniProtKB-KW"/>
</dbReference>
<dbReference type="CDD" id="cd15072">
    <property type="entry name" value="7tmA_Retinal_GPR"/>
    <property type="match status" value="1"/>
</dbReference>
<dbReference type="FunFam" id="1.20.1070.10:FF:000139">
    <property type="entry name" value="RPE-retinal G protein-coupled receptor isoform X1"/>
    <property type="match status" value="1"/>
</dbReference>
<dbReference type="Gene3D" id="1.20.1070.10">
    <property type="entry name" value="Rhodopsin 7-helix transmembrane proteins"/>
    <property type="match status" value="1"/>
</dbReference>
<dbReference type="InterPro" id="IPR050125">
    <property type="entry name" value="GPCR_opsins"/>
</dbReference>
<dbReference type="InterPro" id="IPR000276">
    <property type="entry name" value="GPCR_Rhodpsn"/>
</dbReference>
<dbReference type="InterPro" id="IPR017452">
    <property type="entry name" value="GPCR_Rhodpsn_7TM"/>
</dbReference>
<dbReference type="InterPro" id="IPR027430">
    <property type="entry name" value="Retinal_BS"/>
</dbReference>
<dbReference type="InterPro" id="IPR001793">
    <property type="entry name" value="RPE_GPCR"/>
</dbReference>
<dbReference type="PANTHER" id="PTHR24240">
    <property type="entry name" value="OPSIN"/>
    <property type="match status" value="1"/>
</dbReference>
<dbReference type="Pfam" id="PF00001">
    <property type="entry name" value="7tm_1"/>
    <property type="match status" value="1"/>
</dbReference>
<dbReference type="PRINTS" id="PR00237">
    <property type="entry name" value="GPCRRHODOPSN"/>
</dbReference>
<dbReference type="PRINTS" id="PR00667">
    <property type="entry name" value="RPERETINALR"/>
</dbReference>
<dbReference type="SUPFAM" id="SSF81321">
    <property type="entry name" value="Family A G protein-coupled receptor-like"/>
    <property type="match status" value="1"/>
</dbReference>
<dbReference type="PROSITE" id="PS50262">
    <property type="entry name" value="G_PROTEIN_RECEP_F1_2"/>
    <property type="match status" value="1"/>
</dbReference>
<dbReference type="PROSITE" id="PS00238">
    <property type="entry name" value="OPSIN"/>
    <property type="match status" value="1"/>
</dbReference>
<gene>
    <name type="primary">RGR</name>
</gene>
<name>RGR_BOVIN</name>
<reference key="1">
    <citation type="journal article" date="1993" name="Invest. Ophthalmol. Vis. Sci.">
        <title>An opsin homologue in the retina and pigment epithelium.</title>
        <authorList>
            <person name="Jiang M."/>
            <person name="Pandey S."/>
            <person name="Fong H.K.W."/>
        </authorList>
    </citation>
    <scope>NUCLEOTIDE SEQUENCE [MRNA]</scope>
    <source>
        <tissue>Retina</tissue>
    </source>
</reference>
<reference key="2">
    <citation type="submission" date="2006-06" db="EMBL/GenBank/DDBJ databases">
        <authorList>
            <consortium name="NIH - Mammalian Gene Collection (MGC) project"/>
        </authorList>
    </citation>
    <scope>NUCLEOTIDE SEQUENCE [LARGE SCALE MRNA]</scope>
    <source>
        <strain>Hereford</strain>
        <tissue>Thalamus</tissue>
    </source>
</reference>
<organism>
    <name type="scientific">Bos taurus</name>
    <name type="common">Bovine</name>
    <dbReference type="NCBI Taxonomy" id="9913"/>
    <lineage>
        <taxon>Eukaryota</taxon>
        <taxon>Metazoa</taxon>
        <taxon>Chordata</taxon>
        <taxon>Craniata</taxon>
        <taxon>Vertebrata</taxon>
        <taxon>Euteleostomi</taxon>
        <taxon>Mammalia</taxon>
        <taxon>Eutheria</taxon>
        <taxon>Laurasiatheria</taxon>
        <taxon>Artiodactyla</taxon>
        <taxon>Ruminantia</taxon>
        <taxon>Pecora</taxon>
        <taxon>Bovidae</taxon>
        <taxon>Bovinae</taxon>
        <taxon>Bos</taxon>
    </lineage>
</organism>